<sequence length="464" mass="51656">MKNTAGILAIAGMLIAPLAHADVILHAFNWKYSEVTAKADLIKGAGYKQVLISPPLKSSGNEWWARYQPQDLRLVDSPLGNKQDLEQLIAAMQARGIAVYADVVLNHMANESWKRNDLNYPGTELLGQYAANPDYYSRQRLFGDLGQNLLSASDFHPEGCITDWSDPGHVQYWRLCGGAGDKGLPDLDPNNWVVSQQQAYLKALKGMGIKGFRVDAVKHMSDYQINAVFTPEIKQGMHVFGEVITTGGAGSTDYERFLKPYLDNSGQGAYDFPLFASLRGALGYGGSMNQLADPGAYGQALPGNRAVTFAITHDIPTNDGFRYQILNQTDEKLAYAYLLGRDGGSPLVYSDHGETQDKDGLRWQDYYLRSDLKGMIRFHNAVQGQPMQLIGSGDCFVLFKRGKQGLVGVNKCDYEQEYWLDTAKFELNWYRNYKDVLDQSAVINVQSQWVRVAMPARRPPLAAE</sequence>
<accession>P22630</accession>
<organism>
    <name type="scientific">Aeromonas hydrophila</name>
    <dbReference type="NCBI Taxonomy" id="644"/>
    <lineage>
        <taxon>Bacteria</taxon>
        <taxon>Pseudomonadati</taxon>
        <taxon>Pseudomonadota</taxon>
        <taxon>Gammaproteobacteria</taxon>
        <taxon>Aeromonadales</taxon>
        <taxon>Aeromonadaceae</taxon>
        <taxon>Aeromonas</taxon>
    </lineage>
</organism>
<proteinExistence type="inferred from homology"/>
<protein>
    <recommendedName>
        <fullName>Alpha-amylase</fullName>
        <ecNumber>3.2.1.1</ecNumber>
    </recommendedName>
    <alternativeName>
        <fullName>1,4-alpha-D-glucan glucanohydrolase</fullName>
    </alternativeName>
</protein>
<keyword id="KW-0119">Carbohydrate metabolism</keyword>
<keyword id="KW-0326">Glycosidase</keyword>
<keyword id="KW-0378">Hydrolase</keyword>
<keyword id="KW-0964">Secreted</keyword>
<keyword id="KW-0732">Signal</keyword>
<name>AMY1_AERHY</name>
<feature type="signal peptide" evidence="2">
    <location>
        <begin position="1"/>
        <end position="21"/>
    </location>
</feature>
<feature type="chain" id="PRO_0000001326" description="Alpha-amylase">
    <location>
        <begin position="22"/>
        <end position="464"/>
    </location>
</feature>
<feature type="active site" description="Nucleophile" evidence="1">
    <location>
        <position position="215"/>
    </location>
</feature>
<feature type="active site" description="Proton donor" evidence="1">
    <location>
        <position position="242"/>
    </location>
</feature>
<feature type="binding site" evidence="1">
    <location>
        <position position="107"/>
    </location>
    <ligand>
        <name>substrate</name>
    </ligand>
</feature>
<feature type="binding site" evidence="1">
    <location>
        <position position="213"/>
    </location>
    <ligand>
        <name>substrate</name>
    </ligand>
</feature>
<feature type="binding site" evidence="1">
    <location>
        <begin position="218"/>
        <end position="219"/>
    </location>
    <ligand>
        <name>substrate</name>
    </ligand>
</feature>
<feature type="binding site" evidence="1">
    <location>
        <position position="247"/>
    </location>
    <ligand>
        <name>substrate</name>
    </ligand>
</feature>
<feature type="binding site" evidence="1">
    <location>
        <position position="313"/>
    </location>
    <ligand>
        <name>substrate</name>
    </ligand>
</feature>
<feature type="site" description="Transition state stabilizer" evidence="1">
    <location>
        <position position="314"/>
    </location>
</feature>
<reference key="1">
    <citation type="journal article" date="1988" name="J. Bacteriol.">
        <title>Molecular cloning, characterization, and nucleotide sequence of an extracellular amylase gene from Aeromonas hydrophila.</title>
        <authorList>
            <person name="Gobius K.S."/>
            <person name="Pemberton J.M."/>
        </authorList>
    </citation>
    <scope>NUCLEOTIDE SEQUENCE [GENOMIC DNA]</scope>
    <source>
        <strain>JMP636</strain>
    </source>
</reference>
<dbReference type="EC" id="3.2.1.1"/>
<dbReference type="EMBL" id="M20401">
    <property type="protein sequence ID" value="AAA21936.1"/>
    <property type="molecule type" value="Genomic_DNA"/>
</dbReference>
<dbReference type="PIR" id="A28631">
    <property type="entry name" value="A28631"/>
</dbReference>
<dbReference type="SMR" id="P22630"/>
<dbReference type="CAZy" id="GH13">
    <property type="family name" value="Glycoside Hydrolase Family 13"/>
</dbReference>
<dbReference type="eggNOG" id="COG0366">
    <property type="taxonomic scope" value="Bacteria"/>
</dbReference>
<dbReference type="GO" id="GO:0005576">
    <property type="term" value="C:extracellular region"/>
    <property type="evidence" value="ECO:0007669"/>
    <property type="project" value="UniProtKB-SubCell"/>
</dbReference>
<dbReference type="GO" id="GO:0004556">
    <property type="term" value="F:alpha-amylase activity"/>
    <property type="evidence" value="ECO:0007669"/>
    <property type="project" value="UniProtKB-EC"/>
</dbReference>
<dbReference type="GO" id="GO:0043169">
    <property type="term" value="F:cation binding"/>
    <property type="evidence" value="ECO:0007669"/>
    <property type="project" value="InterPro"/>
</dbReference>
<dbReference type="GO" id="GO:0005975">
    <property type="term" value="P:carbohydrate metabolic process"/>
    <property type="evidence" value="ECO:0007669"/>
    <property type="project" value="InterPro"/>
</dbReference>
<dbReference type="CDD" id="cd11315">
    <property type="entry name" value="AmyAc_bac1_AmyA"/>
    <property type="match status" value="1"/>
</dbReference>
<dbReference type="Gene3D" id="3.20.20.80">
    <property type="entry name" value="Glycosidases"/>
    <property type="match status" value="1"/>
</dbReference>
<dbReference type="InterPro" id="IPR006046">
    <property type="entry name" value="Alpha_amylase"/>
</dbReference>
<dbReference type="InterPro" id="IPR006047">
    <property type="entry name" value="Glyco_hydro_13_cat_dom"/>
</dbReference>
<dbReference type="InterPro" id="IPR017853">
    <property type="entry name" value="Glycoside_hydrolase_SF"/>
</dbReference>
<dbReference type="PANTHER" id="PTHR43447">
    <property type="entry name" value="ALPHA-AMYLASE"/>
    <property type="match status" value="1"/>
</dbReference>
<dbReference type="Pfam" id="PF00128">
    <property type="entry name" value="Alpha-amylase"/>
    <property type="match status" value="1"/>
</dbReference>
<dbReference type="PRINTS" id="PR00110">
    <property type="entry name" value="ALPHAAMYLASE"/>
</dbReference>
<dbReference type="SMART" id="SM00642">
    <property type="entry name" value="Aamy"/>
    <property type="match status" value="1"/>
</dbReference>
<dbReference type="SUPFAM" id="SSF51445">
    <property type="entry name" value="(Trans)glycosidases"/>
    <property type="match status" value="1"/>
</dbReference>
<evidence type="ECO:0000250" key="1"/>
<evidence type="ECO:0000255" key="2"/>
<evidence type="ECO:0000305" key="3"/>
<comment type="catalytic activity">
    <reaction>
        <text>Endohydrolysis of (1-&gt;4)-alpha-D-glucosidic linkages in polysaccharides containing three or more (1-&gt;4)-alpha-linked D-glucose units.</text>
        <dbReference type="EC" id="3.2.1.1"/>
    </reaction>
</comment>
<comment type="subcellular location">
    <subcellularLocation>
        <location>Secreted</location>
    </subcellularLocation>
</comment>
<comment type="similarity">
    <text evidence="3">Belongs to the glycosyl hydrolase 13 family.</text>
</comment>